<reference key="1">
    <citation type="journal article" date="2006" name="J. Bacteriol.">
        <title>Complete genome sequence of Yersinia pestis strains Antiqua and Nepal516: evidence of gene reduction in an emerging pathogen.</title>
        <authorList>
            <person name="Chain P.S.G."/>
            <person name="Hu P."/>
            <person name="Malfatti S.A."/>
            <person name="Radnedge L."/>
            <person name="Larimer F."/>
            <person name="Vergez L.M."/>
            <person name="Worsham P."/>
            <person name="Chu M.C."/>
            <person name="Andersen G.L."/>
        </authorList>
    </citation>
    <scope>NUCLEOTIDE SEQUENCE [LARGE SCALE GENOMIC DNA]</scope>
    <source>
        <strain>Nepal516</strain>
    </source>
</reference>
<reference key="2">
    <citation type="submission" date="2009-04" db="EMBL/GenBank/DDBJ databases">
        <title>Yersinia pestis Nepal516A whole genome shotgun sequencing project.</title>
        <authorList>
            <person name="Plunkett G. III"/>
            <person name="Anderson B.D."/>
            <person name="Baumler D.J."/>
            <person name="Burland V."/>
            <person name="Cabot E.L."/>
            <person name="Glasner J.D."/>
            <person name="Mau B."/>
            <person name="Neeno-Eckwall E."/>
            <person name="Perna N.T."/>
            <person name="Munk A.C."/>
            <person name="Tapia R."/>
            <person name="Green L.D."/>
            <person name="Rogers Y.C."/>
            <person name="Detter J.C."/>
            <person name="Bruce D.C."/>
            <person name="Brettin T.S."/>
        </authorList>
    </citation>
    <scope>NUCLEOTIDE SEQUENCE [LARGE SCALE GENOMIC DNA]</scope>
    <source>
        <strain>Nepal516</strain>
    </source>
</reference>
<organism>
    <name type="scientific">Yersinia pestis bv. Antiqua (strain Nepal516)</name>
    <dbReference type="NCBI Taxonomy" id="377628"/>
    <lineage>
        <taxon>Bacteria</taxon>
        <taxon>Pseudomonadati</taxon>
        <taxon>Pseudomonadota</taxon>
        <taxon>Gammaproteobacteria</taxon>
        <taxon>Enterobacterales</taxon>
        <taxon>Yersiniaceae</taxon>
        <taxon>Yersinia</taxon>
    </lineage>
</organism>
<proteinExistence type="inferred from homology"/>
<sequence length="89" mass="10140">MSLSVEAKAKIVADFGRGTNDTGSSEVQVALLTAQINHLQGHFSEHKKDHHSRRGLLRMVSTRRKLLDYLKRQDVARYASLIERLGLRR</sequence>
<feature type="chain" id="PRO_1000054895" description="Small ribosomal subunit protein uS15">
    <location>
        <begin position="1"/>
        <end position="89"/>
    </location>
</feature>
<gene>
    <name evidence="1" type="primary">rpsO</name>
    <name type="ordered locus">YPN_3237</name>
    <name type="ORF">YP516_3677</name>
</gene>
<dbReference type="EMBL" id="CP000305">
    <property type="protein sequence ID" value="ABG19564.1"/>
    <property type="molecule type" value="Genomic_DNA"/>
</dbReference>
<dbReference type="EMBL" id="ACNQ01000017">
    <property type="protein sequence ID" value="EEO75744.1"/>
    <property type="molecule type" value="Genomic_DNA"/>
</dbReference>
<dbReference type="RefSeq" id="WP_002209257.1">
    <property type="nucleotide sequence ID" value="NZ_ACNQ01000017.1"/>
</dbReference>
<dbReference type="SMR" id="Q1CEL6"/>
<dbReference type="GeneID" id="96663990"/>
<dbReference type="KEGG" id="ypn:YPN_3237"/>
<dbReference type="HOGENOM" id="CLU_148518_0_0_6"/>
<dbReference type="Proteomes" id="UP000008936">
    <property type="component" value="Chromosome"/>
</dbReference>
<dbReference type="GO" id="GO:0022627">
    <property type="term" value="C:cytosolic small ribosomal subunit"/>
    <property type="evidence" value="ECO:0007669"/>
    <property type="project" value="TreeGrafter"/>
</dbReference>
<dbReference type="GO" id="GO:0019843">
    <property type="term" value="F:rRNA binding"/>
    <property type="evidence" value="ECO:0007669"/>
    <property type="project" value="UniProtKB-UniRule"/>
</dbReference>
<dbReference type="GO" id="GO:0003735">
    <property type="term" value="F:structural constituent of ribosome"/>
    <property type="evidence" value="ECO:0007669"/>
    <property type="project" value="InterPro"/>
</dbReference>
<dbReference type="GO" id="GO:0006412">
    <property type="term" value="P:translation"/>
    <property type="evidence" value="ECO:0007669"/>
    <property type="project" value="UniProtKB-UniRule"/>
</dbReference>
<dbReference type="CDD" id="cd00353">
    <property type="entry name" value="Ribosomal_S15p_S13e"/>
    <property type="match status" value="1"/>
</dbReference>
<dbReference type="FunFam" id="1.10.287.10:FF:000002">
    <property type="entry name" value="30S ribosomal protein S15"/>
    <property type="match status" value="1"/>
</dbReference>
<dbReference type="Gene3D" id="6.10.250.3130">
    <property type="match status" value="1"/>
</dbReference>
<dbReference type="Gene3D" id="1.10.287.10">
    <property type="entry name" value="S15/NS1, RNA-binding"/>
    <property type="match status" value="1"/>
</dbReference>
<dbReference type="HAMAP" id="MF_01343_B">
    <property type="entry name" value="Ribosomal_uS15_B"/>
    <property type="match status" value="1"/>
</dbReference>
<dbReference type="InterPro" id="IPR000589">
    <property type="entry name" value="Ribosomal_uS15"/>
</dbReference>
<dbReference type="InterPro" id="IPR005290">
    <property type="entry name" value="Ribosomal_uS15_bac-type"/>
</dbReference>
<dbReference type="InterPro" id="IPR009068">
    <property type="entry name" value="uS15_NS1_RNA-bd_sf"/>
</dbReference>
<dbReference type="NCBIfam" id="TIGR00952">
    <property type="entry name" value="S15_bact"/>
    <property type="match status" value="1"/>
</dbReference>
<dbReference type="PANTHER" id="PTHR23321">
    <property type="entry name" value="RIBOSOMAL PROTEIN S15, BACTERIAL AND ORGANELLAR"/>
    <property type="match status" value="1"/>
</dbReference>
<dbReference type="PANTHER" id="PTHR23321:SF26">
    <property type="entry name" value="SMALL RIBOSOMAL SUBUNIT PROTEIN US15M"/>
    <property type="match status" value="1"/>
</dbReference>
<dbReference type="Pfam" id="PF00312">
    <property type="entry name" value="Ribosomal_S15"/>
    <property type="match status" value="1"/>
</dbReference>
<dbReference type="SMART" id="SM01387">
    <property type="entry name" value="Ribosomal_S15"/>
    <property type="match status" value="1"/>
</dbReference>
<dbReference type="SUPFAM" id="SSF47060">
    <property type="entry name" value="S15/NS1 RNA-binding domain"/>
    <property type="match status" value="1"/>
</dbReference>
<dbReference type="PROSITE" id="PS00362">
    <property type="entry name" value="RIBOSOMAL_S15"/>
    <property type="match status" value="1"/>
</dbReference>
<name>RS15_YERPN</name>
<accession>Q1CEL6</accession>
<accession>C4GXU4</accession>
<keyword id="KW-0687">Ribonucleoprotein</keyword>
<keyword id="KW-0689">Ribosomal protein</keyword>
<keyword id="KW-0694">RNA-binding</keyword>
<keyword id="KW-0699">rRNA-binding</keyword>
<evidence type="ECO:0000255" key="1">
    <source>
        <dbReference type="HAMAP-Rule" id="MF_01343"/>
    </source>
</evidence>
<evidence type="ECO:0000305" key="2"/>
<comment type="function">
    <text evidence="1">One of the primary rRNA binding proteins, it binds directly to 16S rRNA where it helps nucleate assembly of the platform of the 30S subunit by binding and bridging several RNA helices of the 16S rRNA.</text>
</comment>
<comment type="function">
    <text evidence="1">Forms an intersubunit bridge (bridge B4) with the 23S rRNA of the 50S subunit in the ribosome.</text>
</comment>
<comment type="subunit">
    <text evidence="1">Part of the 30S ribosomal subunit. Forms a bridge to the 50S subunit in the 70S ribosome, contacting the 23S rRNA.</text>
</comment>
<comment type="similarity">
    <text evidence="1">Belongs to the universal ribosomal protein uS15 family.</text>
</comment>
<protein>
    <recommendedName>
        <fullName evidence="1">Small ribosomal subunit protein uS15</fullName>
    </recommendedName>
    <alternativeName>
        <fullName evidence="2">30S ribosomal protein S15</fullName>
    </alternativeName>
</protein>